<keyword id="KW-0050">Antiport</keyword>
<keyword id="KW-0997">Cell inner membrane</keyword>
<keyword id="KW-1003">Cell membrane</keyword>
<keyword id="KW-0406">Ion transport</keyword>
<keyword id="KW-0472">Membrane</keyword>
<keyword id="KW-0812">Transmembrane</keyword>
<keyword id="KW-1133">Transmembrane helix</keyword>
<keyword id="KW-0813">Transport</keyword>
<organism>
    <name type="scientific">Mesorhizobium japonicum (strain LMG 29417 / CECT 9101 / MAFF 303099)</name>
    <name type="common">Mesorhizobium loti (strain MAFF 303099)</name>
    <dbReference type="NCBI Taxonomy" id="266835"/>
    <lineage>
        <taxon>Bacteria</taxon>
        <taxon>Pseudomonadati</taxon>
        <taxon>Pseudomonadota</taxon>
        <taxon>Alphaproteobacteria</taxon>
        <taxon>Hyphomicrobiales</taxon>
        <taxon>Phyllobacteriaceae</taxon>
        <taxon>Mesorhizobium</taxon>
    </lineage>
</organism>
<gene>
    <name type="primary">norM</name>
    <name type="ordered locus">mll4906</name>
</gene>
<protein>
    <recommendedName>
        <fullName>Probable multidrug resistance protein NorM</fullName>
    </recommendedName>
    <alternativeName>
        <fullName>Multidrug-efflux transporter</fullName>
    </alternativeName>
</protein>
<name>NORM_RHILO</name>
<proteinExistence type="inferred from homology"/>
<sequence length="467" mass="50528">MSAIDAGARAPENLWRQEIRATLALAWPMVLTNLGQTAMTATDVMMMGRLGPDTLASGALGANLYFMPLIFGLGLMLATSPMIATELGRRRYSVRDLRRTVRQGLWLAILISIPIWIVLWHGEAILLAMGQEPALAHQAGIYLRWLEWAVLPFYGYIVLRSFISALERPGWALIIVFVAVACNALFNWVFMFGNLGFPAMGIAGSGLATSLSSTLMFAGMAAVVMLEKKFRRYRLFGRFWRSDWPRFNGLLRLGLPIAGILAFEVTIFNAAALLMGLIDADSLAAHAIAIQIASISFMVPLGLNQAVTVRVGLAHGAGNPEGVSRAGWTAFVIGVSFMALMGLVMVLWPHLLISAFIDLANPANARVIALAVSFLVFAALFQVFDGAQAVAAGMLRGLHDTKVPMIYAAIGYWGVGLPLGVLLAFHFGFHGVGIWIGLSSGLAVVAALLLTRWLRRDRIAPPLAFGH</sequence>
<evidence type="ECO:0000250" key="1"/>
<evidence type="ECO:0000255" key="2"/>
<evidence type="ECO:0000305" key="3"/>
<dbReference type="EMBL" id="BA000012">
    <property type="protein sequence ID" value="BAB51456.1"/>
    <property type="molecule type" value="Genomic_DNA"/>
</dbReference>
<dbReference type="RefSeq" id="WP_010912797.1">
    <property type="nucleotide sequence ID" value="NC_002678.2"/>
</dbReference>
<dbReference type="SMR" id="Q98D15"/>
<dbReference type="KEGG" id="mlo:mll4906"/>
<dbReference type="PATRIC" id="fig|266835.9.peg.3876"/>
<dbReference type="eggNOG" id="COG0534">
    <property type="taxonomic scope" value="Bacteria"/>
</dbReference>
<dbReference type="HOGENOM" id="CLU_012893_6_3_5"/>
<dbReference type="Proteomes" id="UP000000552">
    <property type="component" value="Chromosome"/>
</dbReference>
<dbReference type="GO" id="GO:0005886">
    <property type="term" value="C:plasma membrane"/>
    <property type="evidence" value="ECO:0007669"/>
    <property type="project" value="UniProtKB-SubCell"/>
</dbReference>
<dbReference type="GO" id="GO:0015297">
    <property type="term" value="F:antiporter activity"/>
    <property type="evidence" value="ECO:0007669"/>
    <property type="project" value="UniProtKB-KW"/>
</dbReference>
<dbReference type="GO" id="GO:0042910">
    <property type="term" value="F:xenobiotic transmembrane transporter activity"/>
    <property type="evidence" value="ECO:0007669"/>
    <property type="project" value="InterPro"/>
</dbReference>
<dbReference type="GO" id="GO:0006811">
    <property type="term" value="P:monoatomic ion transport"/>
    <property type="evidence" value="ECO:0007669"/>
    <property type="project" value="UniProtKB-KW"/>
</dbReference>
<dbReference type="CDD" id="cd13131">
    <property type="entry name" value="MATE_NorM_like"/>
    <property type="match status" value="1"/>
</dbReference>
<dbReference type="InterPro" id="IPR002528">
    <property type="entry name" value="MATE_fam"/>
</dbReference>
<dbReference type="InterPro" id="IPR050222">
    <property type="entry name" value="MATE_MdtK"/>
</dbReference>
<dbReference type="InterPro" id="IPR048279">
    <property type="entry name" value="MdtK-like"/>
</dbReference>
<dbReference type="NCBIfam" id="TIGR00797">
    <property type="entry name" value="matE"/>
    <property type="match status" value="1"/>
</dbReference>
<dbReference type="PANTHER" id="PTHR43298:SF2">
    <property type="entry name" value="FMN_FAD EXPORTER YEEO-RELATED"/>
    <property type="match status" value="1"/>
</dbReference>
<dbReference type="PANTHER" id="PTHR43298">
    <property type="entry name" value="MULTIDRUG RESISTANCE PROTEIN NORM-RELATED"/>
    <property type="match status" value="1"/>
</dbReference>
<dbReference type="Pfam" id="PF01554">
    <property type="entry name" value="MatE"/>
    <property type="match status" value="2"/>
</dbReference>
<dbReference type="PIRSF" id="PIRSF006603">
    <property type="entry name" value="DinF"/>
    <property type="match status" value="1"/>
</dbReference>
<feature type="chain" id="PRO_0000164235" description="Probable multidrug resistance protein NorM">
    <location>
        <begin position="1"/>
        <end position="467"/>
    </location>
</feature>
<feature type="transmembrane region" description="Helical" evidence="2">
    <location>
        <begin position="23"/>
        <end position="42"/>
    </location>
</feature>
<feature type="transmembrane region" description="Helical" evidence="2">
    <location>
        <begin position="62"/>
        <end position="84"/>
    </location>
</feature>
<feature type="transmembrane region" description="Helical" evidence="2">
    <location>
        <begin position="104"/>
        <end position="126"/>
    </location>
</feature>
<feature type="transmembrane region" description="Helical" evidence="2">
    <location>
        <begin position="141"/>
        <end position="163"/>
    </location>
</feature>
<feature type="transmembrane region" description="Helical" evidence="2">
    <location>
        <begin position="170"/>
        <end position="192"/>
    </location>
</feature>
<feature type="transmembrane region" description="Helical" evidence="2">
    <location>
        <begin position="202"/>
        <end position="224"/>
    </location>
</feature>
<feature type="transmembrane region" description="Helical" evidence="2">
    <location>
        <begin position="250"/>
        <end position="272"/>
    </location>
</feature>
<feature type="transmembrane region" description="Helical" evidence="2">
    <location>
        <begin position="287"/>
        <end position="309"/>
    </location>
</feature>
<feature type="transmembrane region" description="Helical" evidence="2">
    <location>
        <begin position="330"/>
        <end position="352"/>
    </location>
</feature>
<feature type="transmembrane region" description="Helical" evidence="2">
    <location>
        <begin position="367"/>
        <end position="384"/>
    </location>
</feature>
<feature type="transmembrane region" description="Helical" evidence="2">
    <location>
        <begin position="405"/>
        <end position="427"/>
    </location>
</feature>
<feature type="transmembrane region" description="Helical" evidence="2">
    <location>
        <begin position="432"/>
        <end position="454"/>
    </location>
</feature>
<reference key="1">
    <citation type="journal article" date="2000" name="DNA Res.">
        <title>Complete genome structure of the nitrogen-fixing symbiotic bacterium Mesorhizobium loti.</title>
        <authorList>
            <person name="Kaneko T."/>
            <person name="Nakamura Y."/>
            <person name="Sato S."/>
            <person name="Asamizu E."/>
            <person name="Kato T."/>
            <person name="Sasamoto S."/>
            <person name="Watanabe A."/>
            <person name="Idesawa K."/>
            <person name="Ishikawa A."/>
            <person name="Kawashima K."/>
            <person name="Kimura T."/>
            <person name="Kishida Y."/>
            <person name="Kiyokawa C."/>
            <person name="Kohara M."/>
            <person name="Matsumoto M."/>
            <person name="Matsuno A."/>
            <person name="Mochizuki Y."/>
            <person name="Nakayama S."/>
            <person name="Nakazaki N."/>
            <person name="Shimpo S."/>
            <person name="Sugimoto M."/>
            <person name="Takeuchi C."/>
            <person name="Yamada M."/>
            <person name="Tabata S."/>
        </authorList>
    </citation>
    <scope>NUCLEOTIDE SEQUENCE [LARGE SCALE GENOMIC DNA]</scope>
    <source>
        <strain>LMG 29417 / CECT 9101 / MAFF 303099</strain>
    </source>
</reference>
<accession>Q98D15</accession>
<comment type="function">
    <text evidence="1">Multidrug efflux pump.</text>
</comment>
<comment type="subcellular location">
    <subcellularLocation>
        <location evidence="1">Cell inner membrane</location>
        <topology evidence="1">Multi-pass membrane protein</topology>
    </subcellularLocation>
</comment>
<comment type="similarity">
    <text evidence="3">Belongs to the multi antimicrobial extrusion (MATE) (TC 2.A.66.1) family.</text>
</comment>